<sequence length="772" mass="85018">MAKKRARVAQDLSHKSKKRQRVEATGDDGEIVGIDQLDWKEVALPDRLEDAEGFFGLEEIDGVDLVRPIGNGEIKFKAARNRVKKNVANSISSNTEHEAGEWSGISDDEEPADDRVHSSKGKQTNVDKIETKEDKEKKSKKQSKKDLKLIDAEIQRKKKPAPKHDIQSGISFEALEEEVDGDEVDVSGWDPLGISAEIQTSLSKLRFAKPTPIQTACIPLIASGHDVVGKASTGSGKTLAFGIPILEYYLKNRREEPVQHNDAELSSKYPIALILSPTRELAHQLSKHITALCTNAPNINARIALLTGGLSVQKQQRVLANADIVIGTPGRLWDVISTGHGLLRKFQNIKFLVIDEADRLLSEGHFKEVEEILTALDRKEIHHKVTADSESEDDASRESPRQTLVFSATFHKGLQQKLAGKGRYFDGDLLDDKQSMEYLLKKLNFREDRPKFIDVNPVAQMAENLKEGLVECPAMEKDLYLYTLMLYHPQHRTLVFTNSISAVRRLTAFLQNLNLPALALHSSMAQKARLRSVERFSSPTADPSSILVATDVAARGLDIKGIDLIIHYHVPRTADTYVHRSGRTARASASGKSILLCAPEEIVGVARLAAKVHASSTASSSSSSSVTKRLPLHSVDLDRRVIARVRPRVALAKKITNHALAKEKLSSENDWLRSAADDLGVDYDSEEFAEQAKGKGRGRGRGGGREAREKAAGSMTKAEVATLKAQLRELLGKRINMGVSERYLTAGRVDIEALLAVGGNKTFLGQVGELDF</sequence>
<organism>
    <name type="scientific">Ajellomyces capsulatus (strain NAm1 / WU24)</name>
    <name type="common">Darling's disease fungus</name>
    <name type="synonym">Histoplasma capsulatum</name>
    <dbReference type="NCBI Taxonomy" id="2059318"/>
    <lineage>
        <taxon>Eukaryota</taxon>
        <taxon>Fungi</taxon>
        <taxon>Dikarya</taxon>
        <taxon>Ascomycota</taxon>
        <taxon>Pezizomycotina</taxon>
        <taxon>Eurotiomycetes</taxon>
        <taxon>Eurotiomycetidae</taxon>
        <taxon>Onygenales</taxon>
        <taxon>Ajellomycetaceae</taxon>
        <taxon>Histoplasma</taxon>
    </lineage>
</organism>
<gene>
    <name type="primary">MAK5</name>
    <name type="ORF">HCAG_05732</name>
</gene>
<evidence type="ECO:0000250" key="1"/>
<evidence type="ECO:0000255" key="2">
    <source>
        <dbReference type="PROSITE-ProRule" id="PRU00541"/>
    </source>
</evidence>
<evidence type="ECO:0000255" key="3">
    <source>
        <dbReference type="PROSITE-ProRule" id="PRU00542"/>
    </source>
</evidence>
<evidence type="ECO:0000256" key="4">
    <source>
        <dbReference type="SAM" id="MobiDB-lite"/>
    </source>
</evidence>
<evidence type="ECO:0000305" key="5"/>
<keyword id="KW-0067">ATP-binding</keyword>
<keyword id="KW-0347">Helicase</keyword>
<keyword id="KW-0378">Hydrolase</keyword>
<keyword id="KW-0547">Nucleotide-binding</keyword>
<keyword id="KW-0539">Nucleus</keyword>
<keyword id="KW-1185">Reference proteome</keyword>
<keyword id="KW-0690">Ribosome biogenesis</keyword>
<keyword id="KW-0694">RNA-binding</keyword>
<keyword id="KW-0698">rRNA processing</keyword>
<comment type="function">
    <text evidence="1">ATP-binding RNA helicase involved in the biogenesis of 60S ribosomal subunits and is required for the normal formation of 25S and 5.8S rRNAs.</text>
</comment>
<comment type="catalytic activity">
    <reaction>
        <text>ATP + H2O = ADP + phosphate + H(+)</text>
        <dbReference type="Rhea" id="RHEA:13065"/>
        <dbReference type="ChEBI" id="CHEBI:15377"/>
        <dbReference type="ChEBI" id="CHEBI:15378"/>
        <dbReference type="ChEBI" id="CHEBI:30616"/>
        <dbReference type="ChEBI" id="CHEBI:43474"/>
        <dbReference type="ChEBI" id="CHEBI:456216"/>
        <dbReference type="EC" id="3.6.4.13"/>
    </reaction>
</comment>
<comment type="subcellular location">
    <subcellularLocation>
        <location evidence="1">Nucleus</location>
        <location evidence="1">Nucleolus</location>
    </subcellularLocation>
</comment>
<comment type="domain">
    <text>The Q motif is unique to and characteristic of the DEAD box family of RNA helicases and controls ATP binding and hydrolysis.</text>
</comment>
<comment type="similarity">
    <text evidence="5">Belongs to the DEAD box helicase family. DDX24/MAK5 subfamily.</text>
</comment>
<reference key="1">
    <citation type="journal article" date="2009" name="Genome Res.">
        <title>Comparative genomic analyses of the human fungal pathogens Coccidioides and their relatives.</title>
        <authorList>
            <person name="Sharpton T.J."/>
            <person name="Stajich J.E."/>
            <person name="Rounsley S.D."/>
            <person name="Gardner M.J."/>
            <person name="Wortman J.R."/>
            <person name="Jordar V.S."/>
            <person name="Maiti R."/>
            <person name="Kodira C.D."/>
            <person name="Neafsey D.E."/>
            <person name="Zeng Q."/>
            <person name="Hung C.-Y."/>
            <person name="McMahan C."/>
            <person name="Muszewska A."/>
            <person name="Grynberg M."/>
            <person name="Mandel M.A."/>
            <person name="Kellner E.M."/>
            <person name="Barker B.M."/>
            <person name="Galgiani J.N."/>
            <person name="Orbach M.J."/>
            <person name="Kirkland T.N."/>
            <person name="Cole G.T."/>
            <person name="Henn M.R."/>
            <person name="Birren B.W."/>
            <person name="Taylor J.W."/>
        </authorList>
    </citation>
    <scope>NUCLEOTIDE SEQUENCE [LARGE SCALE GENOMIC DNA]</scope>
    <source>
        <strain>NAm1 / WU24</strain>
    </source>
</reference>
<accession>A6R9U4</accession>
<dbReference type="EC" id="3.6.4.13"/>
<dbReference type="EMBL" id="CH476661">
    <property type="protein sequence ID" value="EDN09929.1"/>
    <property type="molecule type" value="Genomic_DNA"/>
</dbReference>
<dbReference type="SMR" id="A6R9U4"/>
<dbReference type="STRING" id="339724.A6R9U4"/>
<dbReference type="KEGG" id="aje:HCAG_05732"/>
<dbReference type="VEuPathDB" id="FungiDB:HCAG_05732"/>
<dbReference type="HOGENOM" id="CLU_003041_13_0_1"/>
<dbReference type="OMA" id="QMIQKAR"/>
<dbReference type="OrthoDB" id="8724at299071"/>
<dbReference type="Proteomes" id="UP000009297">
    <property type="component" value="Unassembled WGS sequence"/>
</dbReference>
<dbReference type="GO" id="GO:0005730">
    <property type="term" value="C:nucleolus"/>
    <property type="evidence" value="ECO:0007669"/>
    <property type="project" value="UniProtKB-SubCell"/>
</dbReference>
<dbReference type="GO" id="GO:0005524">
    <property type="term" value="F:ATP binding"/>
    <property type="evidence" value="ECO:0007669"/>
    <property type="project" value="UniProtKB-KW"/>
</dbReference>
<dbReference type="GO" id="GO:0016887">
    <property type="term" value="F:ATP hydrolysis activity"/>
    <property type="evidence" value="ECO:0007669"/>
    <property type="project" value="RHEA"/>
</dbReference>
<dbReference type="GO" id="GO:0003723">
    <property type="term" value="F:RNA binding"/>
    <property type="evidence" value="ECO:0007669"/>
    <property type="project" value="UniProtKB-KW"/>
</dbReference>
<dbReference type="GO" id="GO:0003724">
    <property type="term" value="F:RNA helicase activity"/>
    <property type="evidence" value="ECO:0007669"/>
    <property type="project" value="UniProtKB-EC"/>
</dbReference>
<dbReference type="GO" id="GO:0006364">
    <property type="term" value="P:rRNA processing"/>
    <property type="evidence" value="ECO:0007669"/>
    <property type="project" value="UniProtKB-KW"/>
</dbReference>
<dbReference type="CDD" id="cd17946">
    <property type="entry name" value="DEADc_DDX24"/>
    <property type="match status" value="1"/>
</dbReference>
<dbReference type="CDD" id="cd18787">
    <property type="entry name" value="SF2_C_DEAD"/>
    <property type="match status" value="1"/>
</dbReference>
<dbReference type="Gene3D" id="3.40.50.300">
    <property type="entry name" value="P-loop containing nucleotide triphosphate hydrolases"/>
    <property type="match status" value="2"/>
</dbReference>
<dbReference type="InterPro" id="IPR011545">
    <property type="entry name" value="DEAD/DEAH_box_helicase_dom"/>
</dbReference>
<dbReference type="InterPro" id="IPR014001">
    <property type="entry name" value="Helicase_ATP-bd"/>
</dbReference>
<dbReference type="InterPro" id="IPR001650">
    <property type="entry name" value="Helicase_C-like"/>
</dbReference>
<dbReference type="InterPro" id="IPR027417">
    <property type="entry name" value="P-loop_NTPase"/>
</dbReference>
<dbReference type="InterPro" id="IPR000629">
    <property type="entry name" value="RNA-helicase_DEAD-box_CS"/>
</dbReference>
<dbReference type="InterPro" id="IPR014014">
    <property type="entry name" value="RNA_helicase_DEAD_Q_motif"/>
</dbReference>
<dbReference type="PANTHER" id="PTHR24031">
    <property type="entry name" value="RNA HELICASE"/>
    <property type="match status" value="1"/>
</dbReference>
<dbReference type="Pfam" id="PF00270">
    <property type="entry name" value="DEAD"/>
    <property type="match status" value="1"/>
</dbReference>
<dbReference type="Pfam" id="PF00271">
    <property type="entry name" value="Helicase_C"/>
    <property type="match status" value="1"/>
</dbReference>
<dbReference type="SMART" id="SM00487">
    <property type="entry name" value="DEXDc"/>
    <property type="match status" value="1"/>
</dbReference>
<dbReference type="SMART" id="SM00490">
    <property type="entry name" value="HELICc"/>
    <property type="match status" value="1"/>
</dbReference>
<dbReference type="SUPFAM" id="SSF52540">
    <property type="entry name" value="P-loop containing nucleoside triphosphate hydrolases"/>
    <property type="match status" value="1"/>
</dbReference>
<dbReference type="PROSITE" id="PS00039">
    <property type="entry name" value="DEAD_ATP_HELICASE"/>
    <property type="match status" value="1"/>
</dbReference>
<dbReference type="PROSITE" id="PS51192">
    <property type="entry name" value="HELICASE_ATP_BIND_1"/>
    <property type="match status" value="1"/>
</dbReference>
<dbReference type="PROSITE" id="PS51194">
    <property type="entry name" value="HELICASE_CTER"/>
    <property type="match status" value="1"/>
</dbReference>
<dbReference type="PROSITE" id="PS51195">
    <property type="entry name" value="Q_MOTIF"/>
    <property type="match status" value="1"/>
</dbReference>
<name>MAK5_AJECN</name>
<protein>
    <recommendedName>
        <fullName>ATP-dependent RNA helicase MAK5</fullName>
        <ecNumber>3.6.4.13</ecNumber>
    </recommendedName>
</protein>
<feature type="chain" id="PRO_0000310209" description="ATP-dependent RNA helicase MAK5">
    <location>
        <begin position="1"/>
        <end position="772"/>
    </location>
</feature>
<feature type="domain" description="Helicase ATP-binding" evidence="2">
    <location>
        <begin position="218"/>
        <end position="428"/>
    </location>
</feature>
<feature type="domain" description="Helicase C-terminal" evidence="3">
    <location>
        <begin position="480"/>
        <end position="638"/>
    </location>
</feature>
<feature type="region of interest" description="Disordered" evidence="4">
    <location>
        <begin position="1"/>
        <end position="27"/>
    </location>
</feature>
<feature type="region of interest" description="Disordered" evidence="4">
    <location>
        <begin position="88"/>
        <end position="146"/>
    </location>
</feature>
<feature type="region of interest" description="Disordered" evidence="4">
    <location>
        <begin position="690"/>
        <end position="715"/>
    </location>
</feature>
<feature type="short sequence motif" description="Q motif">
    <location>
        <begin position="187"/>
        <end position="215"/>
    </location>
</feature>
<feature type="short sequence motif" description="DEAD box">
    <location>
        <begin position="355"/>
        <end position="358"/>
    </location>
</feature>
<feature type="compositionally biased region" description="Basic and acidic residues" evidence="4">
    <location>
        <begin position="125"/>
        <end position="137"/>
    </location>
</feature>
<feature type="binding site" evidence="2">
    <location>
        <begin position="231"/>
        <end position="238"/>
    </location>
    <ligand>
        <name>ATP</name>
        <dbReference type="ChEBI" id="CHEBI:30616"/>
    </ligand>
</feature>
<proteinExistence type="inferred from homology"/>